<feature type="chain" id="PRO_0000273873" description="Large ribosomal subunit protein uL30">
    <location>
        <begin position="1"/>
        <end position="60"/>
    </location>
</feature>
<proteinExistence type="inferred from homology"/>
<sequence length="60" mass="6442">MAQIKITLTKSPIGRKPEQRKTVVALGLGKLNSSVVKEDNAAIRGMVTAISHLVTVEDVK</sequence>
<evidence type="ECO:0000255" key="1">
    <source>
        <dbReference type="HAMAP-Rule" id="MF_01371"/>
    </source>
</evidence>
<evidence type="ECO:0000305" key="2"/>
<name>RL30_STRPM</name>
<gene>
    <name evidence="1" type="primary">rpmD</name>
    <name type="ordered locus">M28_Spy0061</name>
</gene>
<protein>
    <recommendedName>
        <fullName evidence="1">Large ribosomal subunit protein uL30</fullName>
    </recommendedName>
    <alternativeName>
        <fullName evidence="2">50S ribosomal protein L30</fullName>
    </alternativeName>
</protein>
<accession>Q48VT1</accession>
<organism>
    <name type="scientific">Streptococcus pyogenes serotype M28 (strain MGAS6180)</name>
    <dbReference type="NCBI Taxonomy" id="319701"/>
    <lineage>
        <taxon>Bacteria</taxon>
        <taxon>Bacillati</taxon>
        <taxon>Bacillota</taxon>
        <taxon>Bacilli</taxon>
        <taxon>Lactobacillales</taxon>
        <taxon>Streptococcaceae</taxon>
        <taxon>Streptococcus</taxon>
    </lineage>
</organism>
<comment type="subunit">
    <text evidence="1">Part of the 50S ribosomal subunit.</text>
</comment>
<comment type="similarity">
    <text evidence="1">Belongs to the universal ribosomal protein uL30 family.</text>
</comment>
<dbReference type="EMBL" id="CP000056">
    <property type="protein sequence ID" value="AAX71175.1"/>
    <property type="molecule type" value="Genomic_DNA"/>
</dbReference>
<dbReference type="RefSeq" id="WP_002986624.1">
    <property type="nucleotide sequence ID" value="NC_007296.2"/>
</dbReference>
<dbReference type="SMR" id="Q48VT1"/>
<dbReference type="GeneID" id="69900044"/>
<dbReference type="KEGG" id="spb:M28_Spy0061"/>
<dbReference type="HOGENOM" id="CLU_131047_2_1_9"/>
<dbReference type="GO" id="GO:0022625">
    <property type="term" value="C:cytosolic large ribosomal subunit"/>
    <property type="evidence" value="ECO:0007669"/>
    <property type="project" value="TreeGrafter"/>
</dbReference>
<dbReference type="GO" id="GO:0003735">
    <property type="term" value="F:structural constituent of ribosome"/>
    <property type="evidence" value="ECO:0007669"/>
    <property type="project" value="InterPro"/>
</dbReference>
<dbReference type="GO" id="GO:0006412">
    <property type="term" value="P:translation"/>
    <property type="evidence" value="ECO:0007669"/>
    <property type="project" value="UniProtKB-UniRule"/>
</dbReference>
<dbReference type="CDD" id="cd01658">
    <property type="entry name" value="Ribosomal_L30"/>
    <property type="match status" value="1"/>
</dbReference>
<dbReference type="FunFam" id="3.30.1390.20:FF:000001">
    <property type="entry name" value="50S ribosomal protein L30"/>
    <property type="match status" value="1"/>
</dbReference>
<dbReference type="Gene3D" id="3.30.1390.20">
    <property type="entry name" value="Ribosomal protein L30, ferredoxin-like fold domain"/>
    <property type="match status" value="1"/>
</dbReference>
<dbReference type="HAMAP" id="MF_01371_B">
    <property type="entry name" value="Ribosomal_uL30_B"/>
    <property type="match status" value="1"/>
</dbReference>
<dbReference type="InterPro" id="IPR036919">
    <property type="entry name" value="Ribo_uL30_ferredoxin-like_sf"/>
</dbReference>
<dbReference type="InterPro" id="IPR005996">
    <property type="entry name" value="Ribosomal_uL30_bac-type"/>
</dbReference>
<dbReference type="InterPro" id="IPR018038">
    <property type="entry name" value="Ribosomal_uL30_CS"/>
</dbReference>
<dbReference type="InterPro" id="IPR016082">
    <property type="entry name" value="Ribosomal_uL30_ferredoxin-like"/>
</dbReference>
<dbReference type="NCBIfam" id="TIGR01308">
    <property type="entry name" value="rpmD_bact"/>
    <property type="match status" value="1"/>
</dbReference>
<dbReference type="PANTHER" id="PTHR15892:SF2">
    <property type="entry name" value="LARGE RIBOSOMAL SUBUNIT PROTEIN UL30M"/>
    <property type="match status" value="1"/>
</dbReference>
<dbReference type="PANTHER" id="PTHR15892">
    <property type="entry name" value="MITOCHONDRIAL RIBOSOMAL PROTEIN L30"/>
    <property type="match status" value="1"/>
</dbReference>
<dbReference type="Pfam" id="PF00327">
    <property type="entry name" value="Ribosomal_L30"/>
    <property type="match status" value="1"/>
</dbReference>
<dbReference type="PIRSF" id="PIRSF002211">
    <property type="entry name" value="Ribosomal_L30_bac-type"/>
    <property type="match status" value="1"/>
</dbReference>
<dbReference type="SUPFAM" id="SSF55129">
    <property type="entry name" value="Ribosomal protein L30p/L7e"/>
    <property type="match status" value="1"/>
</dbReference>
<dbReference type="PROSITE" id="PS00634">
    <property type="entry name" value="RIBOSOMAL_L30"/>
    <property type="match status" value="1"/>
</dbReference>
<reference key="1">
    <citation type="journal article" date="2005" name="J. Infect. Dis.">
        <title>Genome sequence of a serotype M28 strain of group A Streptococcus: potential new insights into puerperal sepsis and bacterial disease specificity.</title>
        <authorList>
            <person name="Green N.M."/>
            <person name="Zhang S."/>
            <person name="Porcella S.F."/>
            <person name="Nagiec M.J."/>
            <person name="Barbian K.D."/>
            <person name="Beres S.B."/>
            <person name="Lefebvre R.B."/>
            <person name="Musser J.M."/>
        </authorList>
    </citation>
    <scope>NUCLEOTIDE SEQUENCE [LARGE SCALE GENOMIC DNA]</scope>
    <source>
        <strain>MGAS6180</strain>
    </source>
</reference>
<keyword id="KW-0687">Ribonucleoprotein</keyword>
<keyword id="KW-0689">Ribosomal protein</keyword>